<name>CDIN1_BOVIN</name>
<accession>Q5E9S8</accession>
<accession>A5PJA2</accession>
<keyword id="KW-0963">Cytoplasm</keyword>
<keyword id="KW-0539">Nucleus</keyword>
<keyword id="KW-1185">Reference proteome</keyword>
<reference key="1">
    <citation type="journal article" date="2005" name="BMC Genomics">
        <title>Characterization of 954 bovine full-CDS cDNA sequences.</title>
        <authorList>
            <person name="Harhay G.P."/>
            <person name="Sonstegard T.S."/>
            <person name="Keele J.W."/>
            <person name="Heaton M.P."/>
            <person name="Clawson M.L."/>
            <person name="Snelling W.M."/>
            <person name="Wiedmann R.T."/>
            <person name="Van Tassell C.P."/>
            <person name="Smith T.P.L."/>
        </authorList>
    </citation>
    <scope>NUCLEOTIDE SEQUENCE [LARGE SCALE MRNA]</scope>
</reference>
<reference key="2">
    <citation type="submission" date="2007-06" db="EMBL/GenBank/DDBJ databases">
        <authorList>
            <consortium name="NIH - Mammalian Gene Collection (MGC) project"/>
        </authorList>
    </citation>
    <scope>NUCLEOTIDE SEQUENCE [LARGE SCALE MRNA]</scope>
    <source>
        <strain>Hereford</strain>
        <tissue>Fetal pons</tissue>
    </source>
</reference>
<gene>
    <name type="primary">CDIN1</name>
</gene>
<proteinExistence type="evidence at transcript level"/>
<evidence type="ECO:0000250" key="1">
    <source>
        <dbReference type="UniProtKB" id="Q9Y2V0"/>
    </source>
</evidence>
<comment type="function">
    <text evidence="1">Plays a role in erythroid cell differentiation.</text>
</comment>
<comment type="subcellular location">
    <subcellularLocation>
        <location evidence="1">Nucleus</location>
    </subcellularLocation>
    <subcellularLocation>
        <location evidence="1">Cytoplasm</location>
    </subcellularLocation>
    <text evidence="1">Mainly nuclear.</text>
</comment>
<feature type="chain" id="PRO_0000271043" description="CDAN1-interacting nuclease 1">
    <location>
        <begin position="1"/>
        <end position="281"/>
    </location>
</feature>
<sequence>MILTKAQYDEIAQCLVSVPPTRQSLRKLKQRFPSQSQATLLSIFSQEYQKHIKRTHAKHHTSEAIESYYQRYLNGVRKNGAAPVLLELANEVDYAPSLMARIILERFLQKHEEAPPSKSVINSMLRDPSQIPDGVLANQVYQCIVNDCCYGPLVDCIKHAIGHEHEVLLRDLLLEKNLSFLDEDQLRARGYDKTPDFILQVPVAVEGHIIHWIESKASFGDECSHHAYLHDQFWSYWNRFGPGLVIYWYGFIQELDCNRERGILLHACFPTDIVTLCHSVA</sequence>
<organism>
    <name type="scientific">Bos taurus</name>
    <name type="common">Bovine</name>
    <dbReference type="NCBI Taxonomy" id="9913"/>
    <lineage>
        <taxon>Eukaryota</taxon>
        <taxon>Metazoa</taxon>
        <taxon>Chordata</taxon>
        <taxon>Craniata</taxon>
        <taxon>Vertebrata</taxon>
        <taxon>Euteleostomi</taxon>
        <taxon>Mammalia</taxon>
        <taxon>Eutheria</taxon>
        <taxon>Laurasiatheria</taxon>
        <taxon>Artiodactyla</taxon>
        <taxon>Ruminantia</taxon>
        <taxon>Pecora</taxon>
        <taxon>Bovidae</taxon>
        <taxon>Bovinae</taxon>
        <taxon>Bos</taxon>
    </lineage>
</organism>
<protein>
    <recommendedName>
        <fullName>CDAN1-interacting nuclease 1</fullName>
    </recommendedName>
</protein>
<dbReference type="EMBL" id="BT020842">
    <property type="protein sequence ID" value="AAX08859.1"/>
    <property type="molecule type" value="mRNA"/>
</dbReference>
<dbReference type="EMBL" id="BC142022">
    <property type="protein sequence ID" value="AAI42023.1"/>
    <property type="molecule type" value="mRNA"/>
</dbReference>
<dbReference type="RefSeq" id="NP_001015668.1">
    <property type="nucleotide sequence ID" value="NM_001015668.1"/>
</dbReference>
<dbReference type="RefSeq" id="XP_005211557.1">
    <property type="nucleotide sequence ID" value="XM_005211500.5"/>
</dbReference>
<dbReference type="SMR" id="Q5E9S8"/>
<dbReference type="FunCoup" id="Q5E9S8">
    <property type="interactions" value="1204"/>
</dbReference>
<dbReference type="STRING" id="9913.ENSBTAP00000002823"/>
<dbReference type="PaxDb" id="9913-ENSBTAP00000002823"/>
<dbReference type="GeneID" id="538758"/>
<dbReference type="KEGG" id="bta:538758"/>
<dbReference type="CTD" id="84529"/>
<dbReference type="VEuPathDB" id="HostDB:ENSBTAG00000002179"/>
<dbReference type="eggNOG" id="ENOG502R9SY">
    <property type="taxonomic scope" value="Eukaryota"/>
</dbReference>
<dbReference type="HOGENOM" id="CLU_076808_0_1_1"/>
<dbReference type="InParanoid" id="Q5E9S8"/>
<dbReference type="OMA" id="CYWNRFG"/>
<dbReference type="OrthoDB" id="1272at2759"/>
<dbReference type="TreeFam" id="TF324079"/>
<dbReference type="Proteomes" id="UP000009136">
    <property type="component" value="Chromosome 10"/>
</dbReference>
<dbReference type="Bgee" id="ENSBTAG00000002179">
    <property type="expression patterns" value="Expressed in semen and 107 other cell types or tissues"/>
</dbReference>
<dbReference type="GO" id="GO:0005737">
    <property type="term" value="C:cytoplasm"/>
    <property type="evidence" value="ECO:0000250"/>
    <property type="project" value="UniProtKB"/>
</dbReference>
<dbReference type="GO" id="GO:0005634">
    <property type="term" value="C:nucleus"/>
    <property type="evidence" value="ECO:0000250"/>
    <property type="project" value="UniProtKB"/>
</dbReference>
<dbReference type="GO" id="GO:0030218">
    <property type="term" value="P:erythrocyte differentiation"/>
    <property type="evidence" value="ECO:0000250"/>
    <property type="project" value="UniProtKB"/>
</dbReference>
<dbReference type="InterPro" id="IPR029404">
    <property type="entry name" value="CDIN1"/>
</dbReference>
<dbReference type="PANTHER" id="PTHR31661:SF1">
    <property type="entry name" value="CDAN1-INTERACTING NUCLEASE 1"/>
    <property type="match status" value="1"/>
</dbReference>
<dbReference type="PANTHER" id="PTHR31661">
    <property type="entry name" value="SIMILAR TO CDNA SEQUENCE BC052040"/>
    <property type="match status" value="1"/>
</dbReference>
<dbReference type="Pfam" id="PF14811">
    <property type="entry name" value="TPD"/>
    <property type="match status" value="1"/>
</dbReference>